<proteinExistence type="inferred from homology"/>
<name>TILS_LEPIN</name>
<accession>Q8F9P6</accession>
<gene>
    <name evidence="1" type="primary">tilS</name>
    <name type="ordered locus">LA_0145</name>
</gene>
<keyword id="KW-0067">ATP-binding</keyword>
<keyword id="KW-0963">Cytoplasm</keyword>
<keyword id="KW-0436">Ligase</keyword>
<keyword id="KW-0547">Nucleotide-binding</keyword>
<keyword id="KW-1185">Reference proteome</keyword>
<keyword id="KW-0819">tRNA processing</keyword>
<feature type="chain" id="PRO_0000181715" description="tRNA(Ile)-lysidine synthase">
    <location>
        <begin position="1"/>
        <end position="433"/>
    </location>
</feature>
<feature type="binding site" evidence="1">
    <location>
        <begin position="37"/>
        <end position="42"/>
    </location>
    <ligand>
        <name>ATP</name>
        <dbReference type="ChEBI" id="CHEBI:30616"/>
    </ligand>
</feature>
<organism>
    <name type="scientific">Leptospira interrogans serogroup Icterohaemorrhagiae serovar Lai (strain 56601)</name>
    <dbReference type="NCBI Taxonomy" id="189518"/>
    <lineage>
        <taxon>Bacteria</taxon>
        <taxon>Pseudomonadati</taxon>
        <taxon>Spirochaetota</taxon>
        <taxon>Spirochaetia</taxon>
        <taxon>Leptospirales</taxon>
        <taxon>Leptospiraceae</taxon>
        <taxon>Leptospira</taxon>
    </lineage>
</organism>
<evidence type="ECO:0000255" key="1">
    <source>
        <dbReference type="HAMAP-Rule" id="MF_01161"/>
    </source>
</evidence>
<comment type="function">
    <text evidence="1">Ligates lysine onto the cytidine present at position 34 of the AUA codon-specific tRNA(Ile) that contains the anticodon CAU, in an ATP-dependent manner. Cytidine is converted to lysidine, thus changing the amino acid specificity of the tRNA from methionine to isoleucine.</text>
</comment>
<comment type="catalytic activity">
    <reaction evidence="1">
        <text>cytidine(34) in tRNA(Ile2) + L-lysine + ATP = lysidine(34) in tRNA(Ile2) + AMP + diphosphate + H(+)</text>
        <dbReference type="Rhea" id="RHEA:43744"/>
        <dbReference type="Rhea" id="RHEA-COMP:10625"/>
        <dbReference type="Rhea" id="RHEA-COMP:10670"/>
        <dbReference type="ChEBI" id="CHEBI:15378"/>
        <dbReference type="ChEBI" id="CHEBI:30616"/>
        <dbReference type="ChEBI" id="CHEBI:32551"/>
        <dbReference type="ChEBI" id="CHEBI:33019"/>
        <dbReference type="ChEBI" id="CHEBI:82748"/>
        <dbReference type="ChEBI" id="CHEBI:83665"/>
        <dbReference type="ChEBI" id="CHEBI:456215"/>
        <dbReference type="EC" id="6.3.4.19"/>
    </reaction>
</comment>
<comment type="subcellular location">
    <subcellularLocation>
        <location evidence="1">Cytoplasm</location>
    </subcellularLocation>
</comment>
<comment type="domain">
    <text>The N-terminal region contains the highly conserved SGGXDS motif, predicted to be a P-loop motif involved in ATP binding.</text>
</comment>
<comment type="similarity">
    <text evidence="1">Belongs to the tRNA(Ile)-lysidine synthase family.</text>
</comment>
<sequence>MRDKISESTQKIFHAVWERIAPFHEMIQSRPAVLSYSGGKDSSILLHFYFWLWIEKKIPAPCIYHLDHSIRFNLEQEKKIFEYADSTFPFSKIFKKKNIPALSRRLGKTLEETGRAFRYKDLKKISDQYEGYIVTGHHSSDYLETILLNLIRGGGWNSLRTLGWYEKNRFRPLFAFSQDEIETILQSEFWKIFEDESNNSDEYLRNRIRSYIIPLLLREGANPDRIYKNFHRIEKPVSKIFSKKNSDHKIPSFLKIDIWVLNDLSQRERKFFIDRYLRSLNLYPTTRNFFRDLTDLLQKENSFSLENKETWFWKSTSSDLYLIPKNSPCLREFRFEPKEMVLKWNGNQKKIPPDLIPDLCPAGAKIRKNGMSIEISEILRQKEIPVPVRKMLPILRGERKVDVICLSLWDPKIGDIVADREVEILPDFQEPGV</sequence>
<protein>
    <recommendedName>
        <fullName evidence="1">tRNA(Ile)-lysidine synthase</fullName>
        <ecNumber evidence="1">6.3.4.19</ecNumber>
    </recommendedName>
    <alternativeName>
        <fullName evidence="1">tRNA(Ile)-2-lysyl-cytidine synthase</fullName>
    </alternativeName>
    <alternativeName>
        <fullName evidence="1">tRNA(Ile)-lysidine synthetase</fullName>
    </alternativeName>
</protein>
<dbReference type="EC" id="6.3.4.19" evidence="1"/>
<dbReference type="EMBL" id="AE010300">
    <property type="protein sequence ID" value="AAN47344.1"/>
    <property type="molecule type" value="Genomic_DNA"/>
</dbReference>
<dbReference type="RefSeq" id="NP_710326.1">
    <property type="nucleotide sequence ID" value="NC_004342.2"/>
</dbReference>
<dbReference type="RefSeq" id="WP_001205039.1">
    <property type="nucleotide sequence ID" value="NC_004342.2"/>
</dbReference>
<dbReference type="SMR" id="Q8F9P6"/>
<dbReference type="STRING" id="189518.LA_0145"/>
<dbReference type="PaxDb" id="189518-LA_0145"/>
<dbReference type="EnsemblBacteria" id="AAN47344">
    <property type="protein sequence ID" value="AAN47344"/>
    <property type="gene ID" value="LA_0145"/>
</dbReference>
<dbReference type="KEGG" id="lil:LA_0145"/>
<dbReference type="PATRIC" id="fig|189518.3.peg.148"/>
<dbReference type="HOGENOM" id="CLU_018869_0_1_12"/>
<dbReference type="InParanoid" id="Q8F9P6"/>
<dbReference type="OrthoDB" id="9807403at2"/>
<dbReference type="Proteomes" id="UP000001408">
    <property type="component" value="Chromosome I"/>
</dbReference>
<dbReference type="GO" id="GO:0005737">
    <property type="term" value="C:cytoplasm"/>
    <property type="evidence" value="ECO:0007669"/>
    <property type="project" value="UniProtKB-SubCell"/>
</dbReference>
<dbReference type="GO" id="GO:0005524">
    <property type="term" value="F:ATP binding"/>
    <property type="evidence" value="ECO:0007669"/>
    <property type="project" value="UniProtKB-UniRule"/>
</dbReference>
<dbReference type="GO" id="GO:0032267">
    <property type="term" value="F:tRNA(Ile)-lysidine synthase activity"/>
    <property type="evidence" value="ECO:0007669"/>
    <property type="project" value="UniProtKB-EC"/>
</dbReference>
<dbReference type="GO" id="GO:0006400">
    <property type="term" value="P:tRNA modification"/>
    <property type="evidence" value="ECO:0007669"/>
    <property type="project" value="UniProtKB-UniRule"/>
</dbReference>
<dbReference type="CDD" id="cd01992">
    <property type="entry name" value="TilS_N"/>
    <property type="match status" value="1"/>
</dbReference>
<dbReference type="Gene3D" id="3.40.50.620">
    <property type="entry name" value="HUPs"/>
    <property type="match status" value="1"/>
</dbReference>
<dbReference type="HAMAP" id="MF_01161">
    <property type="entry name" value="tRNA_Ile_lys_synt"/>
    <property type="match status" value="1"/>
</dbReference>
<dbReference type="InterPro" id="IPR014729">
    <property type="entry name" value="Rossmann-like_a/b/a_fold"/>
</dbReference>
<dbReference type="InterPro" id="IPR011063">
    <property type="entry name" value="TilS/TtcA_N"/>
</dbReference>
<dbReference type="InterPro" id="IPR012094">
    <property type="entry name" value="tRNA_Ile_lys_synt"/>
</dbReference>
<dbReference type="InterPro" id="IPR012795">
    <property type="entry name" value="tRNA_Ile_lys_synt_N"/>
</dbReference>
<dbReference type="NCBIfam" id="TIGR02432">
    <property type="entry name" value="lysidine_TilS_N"/>
    <property type="match status" value="1"/>
</dbReference>
<dbReference type="PANTHER" id="PTHR43033">
    <property type="entry name" value="TRNA(ILE)-LYSIDINE SYNTHASE-RELATED"/>
    <property type="match status" value="1"/>
</dbReference>
<dbReference type="PANTHER" id="PTHR43033:SF1">
    <property type="entry name" value="TRNA(ILE)-LYSIDINE SYNTHASE-RELATED"/>
    <property type="match status" value="1"/>
</dbReference>
<dbReference type="Pfam" id="PF01171">
    <property type="entry name" value="ATP_bind_3"/>
    <property type="match status" value="1"/>
</dbReference>
<dbReference type="SUPFAM" id="SSF52402">
    <property type="entry name" value="Adenine nucleotide alpha hydrolases-like"/>
    <property type="match status" value="1"/>
</dbReference>
<reference key="1">
    <citation type="journal article" date="2003" name="Nature">
        <title>Unique physiological and pathogenic features of Leptospira interrogans revealed by whole-genome sequencing.</title>
        <authorList>
            <person name="Ren S.-X."/>
            <person name="Fu G."/>
            <person name="Jiang X.-G."/>
            <person name="Zeng R."/>
            <person name="Miao Y.-G."/>
            <person name="Xu H."/>
            <person name="Zhang Y.-X."/>
            <person name="Xiong H."/>
            <person name="Lu G."/>
            <person name="Lu L.-F."/>
            <person name="Jiang H.-Q."/>
            <person name="Jia J."/>
            <person name="Tu Y.-F."/>
            <person name="Jiang J.-X."/>
            <person name="Gu W.-Y."/>
            <person name="Zhang Y.-Q."/>
            <person name="Cai Z."/>
            <person name="Sheng H.-H."/>
            <person name="Yin H.-F."/>
            <person name="Zhang Y."/>
            <person name="Zhu G.-F."/>
            <person name="Wan M."/>
            <person name="Huang H.-L."/>
            <person name="Qian Z."/>
            <person name="Wang S.-Y."/>
            <person name="Ma W."/>
            <person name="Yao Z.-J."/>
            <person name="Shen Y."/>
            <person name="Qiang B.-Q."/>
            <person name="Xia Q.-C."/>
            <person name="Guo X.-K."/>
            <person name="Danchin A."/>
            <person name="Saint Girons I."/>
            <person name="Somerville R.L."/>
            <person name="Wen Y.-M."/>
            <person name="Shi M.-H."/>
            <person name="Chen Z."/>
            <person name="Xu J.-G."/>
            <person name="Zhao G.-P."/>
        </authorList>
    </citation>
    <scope>NUCLEOTIDE SEQUENCE [LARGE SCALE GENOMIC DNA]</scope>
    <source>
        <strain>56601</strain>
    </source>
</reference>